<feature type="chain" id="PRO_0000461588" description="Adenosine transporter 1">
    <location>
        <begin position="1"/>
        <end position="496"/>
    </location>
</feature>
<feature type="topological domain" description="Cytoplasmic" evidence="4">
    <location>
        <begin position="1"/>
        <end position="26"/>
    </location>
</feature>
<feature type="transmembrane region" description="Helical" evidence="1">
    <location>
        <begin position="27"/>
        <end position="47"/>
    </location>
</feature>
<feature type="topological domain" description="Extracellular" evidence="4">
    <location>
        <begin position="48"/>
        <end position="77"/>
    </location>
</feature>
<feature type="transmembrane region" description="Helical" evidence="1">
    <location>
        <begin position="78"/>
        <end position="98"/>
    </location>
</feature>
<feature type="topological domain" description="Cytoplasmic" evidence="4">
    <location>
        <begin position="99"/>
        <end position="107"/>
    </location>
</feature>
<feature type="transmembrane region" description="Helical" evidence="1">
    <location>
        <begin position="108"/>
        <end position="128"/>
    </location>
</feature>
<feature type="topological domain" description="Extracellular" evidence="4">
    <location>
        <begin position="129"/>
        <end position="135"/>
    </location>
</feature>
<feature type="transmembrane region" description="Helical" evidence="1">
    <location>
        <begin position="136"/>
        <end position="156"/>
    </location>
</feature>
<feature type="topological domain" description="Cytoplasmic" evidence="4">
    <location>
        <begin position="157"/>
        <end position="172"/>
    </location>
</feature>
<feature type="transmembrane region" description="Helical" evidence="1">
    <location>
        <begin position="173"/>
        <end position="193"/>
    </location>
</feature>
<feature type="topological domain" description="Extracellular" evidence="4">
    <location>
        <begin position="194"/>
        <end position="208"/>
    </location>
</feature>
<feature type="transmembrane region" description="Helical" evidence="1">
    <location>
        <begin position="209"/>
        <end position="229"/>
    </location>
</feature>
<feature type="topological domain" description="Cytoplasmic" evidence="4">
    <location>
        <begin position="230"/>
        <end position="336"/>
    </location>
</feature>
<feature type="transmembrane region" description="Helical" evidence="1">
    <location>
        <begin position="337"/>
        <end position="357"/>
    </location>
</feature>
<feature type="topological domain" description="Extracellular" evidence="4">
    <location>
        <begin position="358"/>
        <end position="365"/>
    </location>
</feature>
<feature type="transmembrane region" description="Helical" evidence="1">
    <location>
        <begin position="366"/>
        <end position="386"/>
    </location>
</feature>
<feature type="topological domain" description="Cytoplasmic" evidence="4">
    <location>
        <begin position="387"/>
        <end position="399"/>
    </location>
</feature>
<feature type="transmembrane region" description="Helical" evidence="1">
    <location>
        <begin position="400"/>
        <end position="420"/>
    </location>
</feature>
<feature type="topological domain" description="Extracellular" evidence="4">
    <location>
        <begin position="421"/>
        <end position="431"/>
    </location>
</feature>
<feature type="transmembrane region" description="Helical" evidence="1">
    <location>
        <begin position="432"/>
        <end position="452"/>
    </location>
</feature>
<feature type="topological domain" description="Cytoplasmic" evidence="4">
    <location>
        <begin position="453"/>
        <end position="464"/>
    </location>
</feature>
<feature type="transmembrane region" description="Helical" evidence="1">
    <location>
        <begin position="465"/>
        <end position="485"/>
    </location>
</feature>
<feature type="topological domain" description="Extracellular" evidence="4">
    <location>
        <begin position="486"/>
        <end position="496"/>
    </location>
</feature>
<feature type="sequence variant" description="In AT1.2 allele." evidence="2">
    <original>I</original>
    <variation>M</variation>
    <location>
        <position position="433"/>
    </location>
</feature>
<feature type="sequence variant" description="In AT1.2 allele." evidence="2">
    <original>I</original>
    <variation>V</variation>
    <location>
        <position position="481"/>
    </location>
</feature>
<feature type="mutagenesis site" description="Decreases affinity for adenosine." evidence="2">
    <original>K</original>
    <variation>T</variation>
    <location>
        <position position="153"/>
    </location>
</feature>
<protein>
    <recommendedName>
        <fullName evidence="3">Adenosine transporter 1</fullName>
        <shortName evidence="3">CfAT1</shortName>
    </recommendedName>
</protein>
<accession>J9UD11</accession>
<accession>J9U6P1</accession>
<name>AT1_CRIFA</name>
<organism evidence="5">
    <name type="scientific">Crithidia fasciculata</name>
    <dbReference type="NCBI Taxonomy" id="5656"/>
    <lineage>
        <taxon>Eukaryota</taxon>
        <taxon>Discoba</taxon>
        <taxon>Euglenozoa</taxon>
        <taxon>Kinetoplastea</taxon>
        <taxon>Metakinetoplastina</taxon>
        <taxon>Trypanosomatida</taxon>
        <taxon>Trypanosomatidae</taxon>
        <taxon>Leishmaniinae</taxon>
        <taxon>Crithidia</taxon>
    </lineage>
</organism>
<reference evidence="5 6" key="1">
    <citation type="journal article" date="2013" name="Mol. Biochem. Parasitol.">
        <title>Crithidia fasciculata adenosine transporter 1 (CfAT1), a novel high-affinity equilibrative nucleoside transporter specific for adenosine.</title>
        <authorList>
            <person name="Arendt C.S."/>
        </authorList>
    </citation>
    <scope>NUCLEOTIDE SEQUENCE [GENOMIC DNA]</scope>
    <scope>FUNCTION</scope>
    <scope>TRANSPORTER ACTIVITY</scope>
    <scope>BIOPHYSICOCHEMICAL PROPERTIES</scope>
    <scope>MUTAGENESIS OF LYS-153</scope>
    <scope>VARIANTS MET-433 AND VAL-481</scope>
</reference>
<comment type="function">
    <text evidence="2">Adenosine transporter.</text>
</comment>
<comment type="catalytic activity">
    <reaction evidence="2">
        <text>adenosine(in) = adenosine(out)</text>
        <dbReference type="Rhea" id="RHEA:75343"/>
        <dbReference type="ChEBI" id="CHEBI:16335"/>
    </reaction>
</comment>
<comment type="biophysicochemical properties">
    <kinetics>
        <KM evidence="2">0.81 uM for adenosine</KM>
    </kinetics>
</comment>
<comment type="subcellular location">
    <subcellularLocation>
        <location evidence="1">Membrane</location>
        <topology evidence="1">Multi-pass membrane protein</topology>
    </subcellularLocation>
</comment>
<comment type="similarity">
    <text evidence="4">Belongs to the SLC29A/ENT transporter (TC 2.A.57) family.</text>
</comment>
<evidence type="ECO:0000255" key="1"/>
<evidence type="ECO:0000269" key="2">
    <source>
    </source>
</evidence>
<evidence type="ECO:0000303" key="3">
    <source>
    </source>
</evidence>
<evidence type="ECO:0000305" key="4"/>
<evidence type="ECO:0000312" key="5">
    <source>
        <dbReference type="EMBL" id="AFR68832.1"/>
    </source>
</evidence>
<evidence type="ECO:0000312" key="6">
    <source>
        <dbReference type="EMBL" id="AFR68833.1"/>
    </source>
</evidence>
<dbReference type="EMBL" id="JX271578">
    <property type="protein sequence ID" value="AFR68832.1"/>
    <property type="molecule type" value="Genomic_DNA"/>
</dbReference>
<dbReference type="EMBL" id="JX271579">
    <property type="protein sequence ID" value="AFR68833.1"/>
    <property type="molecule type" value="Genomic_DNA"/>
</dbReference>
<dbReference type="TCDB" id="2.A.57.2.9">
    <property type="family name" value="the equilibrative nucleoside transporter (ent) family"/>
</dbReference>
<dbReference type="VEuPathDB" id="TriTrypDB:CFAC1_240044700"/>
<dbReference type="GO" id="GO:0005886">
    <property type="term" value="C:plasma membrane"/>
    <property type="evidence" value="ECO:0007669"/>
    <property type="project" value="TreeGrafter"/>
</dbReference>
<dbReference type="GO" id="GO:0005337">
    <property type="term" value="F:nucleoside transmembrane transporter activity"/>
    <property type="evidence" value="ECO:0007669"/>
    <property type="project" value="InterPro"/>
</dbReference>
<dbReference type="InterPro" id="IPR034764">
    <property type="entry name" value="ENT1/ENT2"/>
</dbReference>
<dbReference type="InterPro" id="IPR002259">
    <property type="entry name" value="Eqnu_transpt"/>
</dbReference>
<dbReference type="InterPro" id="IPR036259">
    <property type="entry name" value="MFS_trans_sf"/>
</dbReference>
<dbReference type="NCBIfam" id="TIGR00939">
    <property type="entry name" value="2a57"/>
    <property type="match status" value="1"/>
</dbReference>
<dbReference type="PANTHER" id="PTHR10332">
    <property type="entry name" value="EQUILIBRATIVE NUCLEOSIDE TRANSPORTER"/>
    <property type="match status" value="1"/>
</dbReference>
<dbReference type="PANTHER" id="PTHR10332:SF10">
    <property type="entry name" value="EQUILIBRATIVE NUCLEOSIDE TRANSPORTER 4"/>
    <property type="match status" value="1"/>
</dbReference>
<dbReference type="Pfam" id="PF01733">
    <property type="entry name" value="Nucleoside_tran"/>
    <property type="match status" value="1"/>
</dbReference>
<dbReference type="PRINTS" id="PR01130">
    <property type="entry name" value="DERENTRNSPRT"/>
</dbReference>
<dbReference type="SUPFAM" id="SSF103473">
    <property type="entry name" value="MFS general substrate transporter"/>
    <property type="match status" value="1"/>
</dbReference>
<proteinExistence type="evidence at protein level"/>
<gene>
    <name evidence="5" type="primary">AT1</name>
    <name evidence="6" type="synonym">AT1.2</name>
</gene>
<keyword id="KW-0472">Membrane</keyword>
<keyword id="KW-0812">Transmembrane</keyword>
<keyword id="KW-1133">Transmembrane helix</keyword>
<keyword id="KW-0813">Transport</keyword>
<sequence length="496" mass="54196">MSSHTSTPNHASAAPPRKWYDMTSAEFYVYVVAFMCGISMLMPINAVFSAPSYMLQYYLYATKDPNHVPQMTNFWSNVMTYYNLIGLVTGLVMEPLTLLKSFRKIPMLVRLLGGLCILIVEIIVLMAVPARGTTEGGAVATMCIAGFIGGLGKSIFESTVYGMFGAFPPSFTSIMMGGVGISGVLTSLIQIIVKAALPDTYEGVKKQSYIYYSLDVGIQAATFIALIMMRFNSFAQLHFGDLGGVKSKVDAGSLAGAGENVREPGAEATELEQYTEPAIGQIQEKNAEAHKDDPLVDREHSDDVDEHGDALRAVEGPTSNEILRATSIISVLRSIKWMFVSCAFVFVVTLFLFPGIATGMFPESKWFATVAVFIFNCCDVLGRVAPALRFMWPRSYNQRWIIVAASFARVIFVPLLLLYSYHYIPSEAYGYVIMVIFGFSSGYVASMSLTLGPQSKGIDNDGKRFVAGTLMGISILVGGTIGTVLSIMTQTIREKY</sequence>